<proteinExistence type="inferred from homology"/>
<accession>A1AGT6</accession>
<reference key="1">
    <citation type="journal article" date="2007" name="J. Bacteriol.">
        <title>The genome sequence of avian pathogenic Escherichia coli strain O1:K1:H7 shares strong similarities with human extraintestinal pathogenic E. coli genomes.</title>
        <authorList>
            <person name="Johnson T.J."/>
            <person name="Kariyawasam S."/>
            <person name="Wannemuehler Y."/>
            <person name="Mangiamele P."/>
            <person name="Johnson S.J."/>
            <person name="Doetkott C."/>
            <person name="Skyberg J.A."/>
            <person name="Lynne A.M."/>
            <person name="Johnson J.R."/>
            <person name="Nolan L.K."/>
        </authorList>
    </citation>
    <scope>NUCLEOTIDE SEQUENCE [LARGE SCALE GENOMIC DNA]</scope>
</reference>
<comment type="function">
    <text evidence="2">The physiological role of BioH is to remove the methyl group introduced by BioC when the pimeloyl moiety is complete. It allows to synthesize pimeloyl-ACP via the fatty acid synthetic pathway through the hydrolysis of the ester bonds of pimeloyl-ACP esters.</text>
</comment>
<comment type="catalytic activity">
    <reaction evidence="2">
        <text>6-carboxyhexanoyl-[ACP] methyl ester + H2O = 6-carboxyhexanoyl-[ACP] + methanol + H(+)</text>
        <dbReference type="Rhea" id="RHEA:42700"/>
        <dbReference type="Rhea" id="RHEA-COMP:9955"/>
        <dbReference type="Rhea" id="RHEA-COMP:10186"/>
        <dbReference type="ChEBI" id="CHEBI:15377"/>
        <dbReference type="ChEBI" id="CHEBI:15378"/>
        <dbReference type="ChEBI" id="CHEBI:17790"/>
        <dbReference type="ChEBI" id="CHEBI:78846"/>
        <dbReference type="ChEBI" id="CHEBI:82735"/>
        <dbReference type="EC" id="3.1.1.85"/>
    </reaction>
</comment>
<comment type="pathway">
    <text evidence="2">Cofactor biosynthesis; biotin biosynthesis.</text>
</comment>
<comment type="subunit">
    <text evidence="2">Monomer.</text>
</comment>
<comment type="subcellular location">
    <subcellularLocation>
        <location evidence="2">Cytoplasm</location>
    </subcellularLocation>
</comment>
<comment type="similarity">
    <text evidence="2">Belongs to the AB hydrolase superfamily. Carboxylesterase BioH family.</text>
</comment>
<name>BIOH_ECOK1</name>
<sequence length="256" mass="28580">MNNIWWQTKGQGNVHLVLLHGWGLNAEVWRCIDEELSSHFTLHLVDLPGFGRSRGFGALSLADMAEAVLRQAPDKAIWLGWSLGGLVASQIALTHPERVQALVTVASSPCFSARDEWPGIKPDVLAGFQQQLSDDFQRTVERFLALQTMGTETARQDARALKKTVLALPMPEVDVLNGGLEILKTVDLRLPLQNVSMPFLRLYGYLDGLVPRKVVPMLDKLWPHSESYIFAKAAHAPFISHPVEFHHLLVALKQRV</sequence>
<dbReference type="EC" id="3.1.1.85" evidence="2"/>
<dbReference type="EMBL" id="CP000468">
    <property type="protein sequence ID" value="ABJ02876.1"/>
    <property type="molecule type" value="Genomic_DNA"/>
</dbReference>
<dbReference type="RefSeq" id="WP_001060078.1">
    <property type="nucleotide sequence ID" value="NZ_CADILS010000030.1"/>
</dbReference>
<dbReference type="SMR" id="A1AGT6"/>
<dbReference type="ESTHER" id="ecoli-bioh">
    <property type="family name" value="BioH"/>
</dbReference>
<dbReference type="MEROPS" id="S33.994"/>
<dbReference type="KEGG" id="ecv:APECO1_3054"/>
<dbReference type="HOGENOM" id="CLU_020336_12_2_6"/>
<dbReference type="UniPathway" id="UPA00078"/>
<dbReference type="Proteomes" id="UP000008216">
    <property type="component" value="Chromosome"/>
</dbReference>
<dbReference type="GO" id="GO:0005737">
    <property type="term" value="C:cytoplasm"/>
    <property type="evidence" value="ECO:0007669"/>
    <property type="project" value="UniProtKB-SubCell"/>
</dbReference>
<dbReference type="GO" id="GO:0090499">
    <property type="term" value="F:pimelyl-[acyl-carrier protein] methyl ester esterase activity"/>
    <property type="evidence" value="ECO:0007669"/>
    <property type="project" value="UniProtKB-EC"/>
</dbReference>
<dbReference type="GO" id="GO:0009102">
    <property type="term" value="P:biotin biosynthetic process"/>
    <property type="evidence" value="ECO:0007669"/>
    <property type="project" value="UniProtKB-UniRule"/>
</dbReference>
<dbReference type="FunFam" id="3.40.50.1820:FF:000045">
    <property type="entry name" value="Pimeloyl-[acyl-carrier protein] methyl ester esterase"/>
    <property type="match status" value="1"/>
</dbReference>
<dbReference type="Gene3D" id="3.40.50.1820">
    <property type="entry name" value="alpha/beta hydrolase"/>
    <property type="match status" value="1"/>
</dbReference>
<dbReference type="HAMAP" id="MF_01260">
    <property type="entry name" value="Carboxylester"/>
    <property type="match status" value="1"/>
</dbReference>
<dbReference type="InterPro" id="IPR000073">
    <property type="entry name" value="AB_hydrolase_1"/>
</dbReference>
<dbReference type="InterPro" id="IPR029058">
    <property type="entry name" value="AB_hydrolase_fold"/>
</dbReference>
<dbReference type="InterPro" id="IPR010076">
    <property type="entry name" value="BioH"/>
</dbReference>
<dbReference type="InterPro" id="IPR050228">
    <property type="entry name" value="Carboxylesterase_BioH"/>
</dbReference>
<dbReference type="NCBIfam" id="TIGR01738">
    <property type="entry name" value="bioH"/>
    <property type="match status" value="1"/>
</dbReference>
<dbReference type="NCBIfam" id="NF007674">
    <property type="entry name" value="PRK10349.1"/>
    <property type="match status" value="1"/>
</dbReference>
<dbReference type="PANTHER" id="PTHR43194">
    <property type="entry name" value="HYDROLASE ALPHA/BETA FOLD FAMILY"/>
    <property type="match status" value="1"/>
</dbReference>
<dbReference type="PANTHER" id="PTHR43194:SF5">
    <property type="entry name" value="PIMELOYL-[ACYL-CARRIER PROTEIN] METHYL ESTER ESTERASE"/>
    <property type="match status" value="1"/>
</dbReference>
<dbReference type="Pfam" id="PF00561">
    <property type="entry name" value="Abhydrolase_1"/>
    <property type="match status" value="1"/>
</dbReference>
<dbReference type="SUPFAM" id="SSF53474">
    <property type="entry name" value="alpha/beta-Hydrolases"/>
    <property type="match status" value="1"/>
</dbReference>
<keyword id="KW-0093">Biotin biosynthesis</keyword>
<keyword id="KW-0963">Cytoplasm</keyword>
<keyword id="KW-0378">Hydrolase</keyword>
<keyword id="KW-1185">Reference proteome</keyword>
<keyword id="KW-0719">Serine esterase</keyword>
<protein>
    <recommendedName>
        <fullName evidence="2">Pimeloyl-[acyl-carrier protein] methyl ester esterase</fullName>
        <ecNumber evidence="2">3.1.1.85</ecNumber>
    </recommendedName>
    <alternativeName>
        <fullName evidence="2">Biotin synthesis protein BioH</fullName>
    </alternativeName>
    <alternativeName>
        <fullName evidence="2">Carboxylesterase BioH</fullName>
    </alternativeName>
</protein>
<feature type="chain" id="PRO_1000067266" description="Pimeloyl-[acyl-carrier protein] methyl ester esterase">
    <location>
        <begin position="1"/>
        <end position="256"/>
    </location>
</feature>
<feature type="domain" description="AB hydrolase-1" evidence="1">
    <location>
        <begin position="15"/>
        <end position="242"/>
    </location>
</feature>
<feature type="active site" description="Nucleophile" evidence="2">
    <location>
        <position position="82"/>
    </location>
</feature>
<feature type="active site" evidence="2">
    <location>
        <position position="207"/>
    </location>
</feature>
<feature type="active site" evidence="2">
    <location>
        <position position="235"/>
    </location>
</feature>
<feature type="binding site" evidence="2">
    <location>
        <position position="22"/>
    </location>
    <ligand>
        <name>substrate</name>
    </ligand>
</feature>
<feature type="binding site" evidence="2">
    <location>
        <begin position="82"/>
        <end position="83"/>
    </location>
    <ligand>
        <name>substrate</name>
    </ligand>
</feature>
<feature type="binding site" evidence="2">
    <location>
        <begin position="143"/>
        <end position="147"/>
    </location>
    <ligand>
        <name>substrate</name>
    </ligand>
</feature>
<feature type="binding site" evidence="2">
    <location>
        <position position="235"/>
    </location>
    <ligand>
        <name>substrate</name>
    </ligand>
</feature>
<evidence type="ECO:0000255" key="1"/>
<evidence type="ECO:0000255" key="2">
    <source>
        <dbReference type="HAMAP-Rule" id="MF_01260"/>
    </source>
</evidence>
<organism>
    <name type="scientific">Escherichia coli O1:K1 / APEC</name>
    <dbReference type="NCBI Taxonomy" id="405955"/>
    <lineage>
        <taxon>Bacteria</taxon>
        <taxon>Pseudomonadati</taxon>
        <taxon>Pseudomonadota</taxon>
        <taxon>Gammaproteobacteria</taxon>
        <taxon>Enterobacterales</taxon>
        <taxon>Enterobacteriaceae</taxon>
        <taxon>Escherichia</taxon>
    </lineage>
</organism>
<gene>
    <name evidence="2" type="primary">bioH</name>
    <name type="ordered locus">Ecok1_33820</name>
    <name type="ORF">APECO1_3054</name>
</gene>